<protein>
    <recommendedName>
        <fullName evidence="1">UPF0060 membrane protein DSY4629</fullName>
    </recommendedName>
</protein>
<proteinExistence type="inferred from homology"/>
<organism>
    <name type="scientific">Desulfitobacterium hafniense (strain Y51)</name>
    <dbReference type="NCBI Taxonomy" id="138119"/>
    <lineage>
        <taxon>Bacteria</taxon>
        <taxon>Bacillati</taxon>
        <taxon>Bacillota</taxon>
        <taxon>Clostridia</taxon>
        <taxon>Eubacteriales</taxon>
        <taxon>Desulfitobacteriaceae</taxon>
        <taxon>Desulfitobacterium</taxon>
    </lineage>
</organism>
<name>Y4629_DESHY</name>
<evidence type="ECO:0000255" key="1">
    <source>
        <dbReference type="HAMAP-Rule" id="MF_00010"/>
    </source>
</evidence>
<keyword id="KW-1003">Cell membrane</keyword>
<keyword id="KW-0472">Membrane</keyword>
<keyword id="KW-1185">Reference proteome</keyword>
<keyword id="KW-0812">Transmembrane</keyword>
<keyword id="KW-1133">Transmembrane helix</keyword>
<gene>
    <name type="ordered locus">DSY4629</name>
</gene>
<sequence>MFYAIILFILAGLAEIGGGYLVWLWLREAKPFWYGIIGGLILVLYGVIPTLQKFPSFGRVYAAYGGVFVILAVLWGWGIDKKVPDNYDWIGAVICLVGVSVMLWAPRN</sequence>
<reference key="1">
    <citation type="journal article" date="2006" name="J. Bacteriol.">
        <title>Complete genome sequence of the dehalorespiring bacterium Desulfitobacterium hafniense Y51 and comparison with Dehalococcoides ethenogenes 195.</title>
        <authorList>
            <person name="Nonaka H."/>
            <person name="Keresztes G."/>
            <person name="Shinoda Y."/>
            <person name="Ikenaga Y."/>
            <person name="Abe M."/>
            <person name="Naito K."/>
            <person name="Inatomi K."/>
            <person name="Furukawa K."/>
            <person name="Inui M."/>
            <person name="Yukawa H."/>
        </authorList>
    </citation>
    <scope>NUCLEOTIDE SEQUENCE [LARGE SCALE GENOMIC DNA]</scope>
    <source>
        <strain>Y51</strain>
    </source>
</reference>
<comment type="subcellular location">
    <subcellularLocation>
        <location evidence="1">Cell membrane</location>
        <topology evidence="1">Multi-pass membrane protein</topology>
    </subcellularLocation>
</comment>
<comment type="similarity">
    <text evidence="1">Belongs to the UPF0060 family.</text>
</comment>
<feature type="chain" id="PRO_0000282221" description="UPF0060 membrane protein DSY4629">
    <location>
        <begin position="1"/>
        <end position="108"/>
    </location>
</feature>
<feature type="transmembrane region" description="Helical" evidence="1">
    <location>
        <begin position="5"/>
        <end position="25"/>
    </location>
</feature>
<feature type="transmembrane region" description="Helical" evidence="1">
    <location>
        <begin position="31"/>
        <end position="51"/>
    </location>
</feature>
<feature type="transmembrane region" description="Helical" evidence="1">
    <location>
        <begin position="60"/>
        <end position="80"/>
    </location>
</feature>
<feature type="transmembrane region" description="Helical" evidence="1">
    <location>
        <begin position="86"/>
        <end position="106"/>
    </location>
</feature>
<dbReference type="EMBL" id="AP008230">
    <property type="protein sequence ID" value="BAE86418.1"/>
    <property type="molecule type" value="Genomic_DNA"/>
</dbReference>
<dbReference type="RefSeq" id="WP_011461986.1">
    <property type="nucleotide sequence ID" value="NC_007907.1"/>
</dbReference>
<dbReference type="SMR" id="Q24NH4"/>
<dbReference type="KEGG" id="dsy:DSY4629"/>
<dbReference type="eggNOG" id="COG1742">
    <property type="taxonomic scope" value="Bacteria"/>
</dbReference>
<dbReference type="HOGENOM" id="CLU_117653_0_1_9"/>
<dbReference type="Proteomes" id="UP000001946">
    <property type="component" value="Chromosome"/>
</dbReference>
<dbReference type="GO" id="GO:0005886">
    <property type="term" value="C:plasma membrane"/>
    <property type="evidence" value="ECO:0007669"/>
    <property type="project" value="UniProtKB-SubCell"/>
</dbReference>
<dbReference type="HAMAP" id="MF_00010">
    <property type="entry name" value="UPF0060"/>
    <property type="match status" value="1"/>
</dbReference>
<dbReference type="InterPro" id="IPR003844">
    <property type="entry name" value="UPF0060"/>
</dbReference>
<dbReference type="NCBIfam" id="NF002586">
    <property type="entry name" value="PRK02237.1"/>
    <property type="match status" value="1"/>
</dbReference>
<dbReference type="PANTHER" id="PTHR36116">
    <property type="entry name" value="UPF0060 MEMBRANE PROTEIN YNFA"/>
    <property type="match status" value="1"/>
</dbReference>
<dbReference type="PANTHER" id="PTHR36116:SF1">
    <property type="entry name" value="UPF0060 MEMBRANE PROTEIN YNFA"/>
    <property type="match status" value="1"/>
</dbReference>
<dbReference type="Pfam" id="PF02694">
    <property type="entry name" value="UPF0060"/>
    <property type="match status" value="1"/>
</dbReference>
<dbReference type="SUPFAM" id="SSF103481">
    <property type="entry name" value="Multidrug resistance efflux transporter EmrE"/>
    <property type="match status" value="1"/>
</dbReference>
<accession>Q24NH4</accession>